<comment type="function">
    <text evidence="1">Probably part of an ABC transporter complex. Responsible for energy coupling to the transport system (By similarity).</text>
</comment>
<comment type="subcellular location">
    <subcellularLocation>
        <location evidence="1">Cell membrane</location>
        <topology evidence="1">Peripheral membrane protein</topology>
    </subcellularLocation>
</comment>
<comment type="similarity">
    <text evidence="3">Belongs to the ABC transporter superfamily.</text>
</comment>
<feature type="chain" id="PRO_0000091996" description="Putative ABC transporter ATP-binding protein CA_C0773">
    <location>
        <begin position="1"/>
        <end position="241"/>
    </location>
</feature>
<feature type="domain" description="ABC transporter" evidence="2">
    <location>
        <begin position="2"/>
        <end position="241"/>
    </location>
</feature>
<feature type="binding site" evidence="2">
    <location>
        <begin position="34"/>
        <end position="41"/>
    </location>
    <ligand>
        <name>ATP</name>
        <dbReference type="ChEBI" id="CHEBI:30616"/>
    </ligand>
</feature>
<dbReference type="EC" id="7.-.-.-"/>
<dbReference type="EMBL" id="AE001437">
    <property type="protein sequence ID" value="AAK78749.1"/>
    <property type="molecule type" value="Genomic_DNA"/>
</dbReference>
<dbReference type="PIR" id="B96995">
    <property type="entry name" value="B96995"/>
</dbReference>
<dbReference type="RefSeq" id="NP_347409.1">
    <property type="nucleotide sequence ID" value="NC_003030.1"/>
</dbReference>
<dbReference type="RefSeq" id="WP_010964091.1">
    <property type="nucleotide sequence ID" value="NC_003030.1"/>
</dbReference>
<dbReference type="SMR" id="Q97KZ3"/>
<dbReference type="STRING" id="272562.CA_C0773"/>
<dbReference type="KEGG" id="cac:CA_C0773"/>
<dbReference type="PATRIC" id="fig|272562.8.peg.978"/>
<dbReference type="eggNOG" id="COG1122">
    <property type="taxonomic scope" value="Bacteria"/>
</dbReference>
<dbReference type="HOGENOM" id="CLU_000604_1_22_9"/>
<dbReference type="OrthoDB" id="9784332at2"/>
<dbReference type="Proteomes" id="UP000000814">
    <property type="component" value="Chromosome"/>
</dbReference>
<dbReference type="GO" id="GO:0043190">
    <property type="term" value="C:ATP-binding cassette (ABC) transporter complex"/>
    <property type="evidence" value="ECO:0007669"/>
    <property type="project" value="TreeGrafter"/>
</dbReference>
<dbReference type="GO" id="GO:0005524">
    <property type="term" value="F:ATP binding"/>
    <property type="evidence" value="ECO:0007669"/>
    <property type="project" value="UniProtKB-KW"/>
</dbReference>
<dbReference type="GO" id="GO:0016887">
    <property type="term" value="F:ATP hydrolysis activity"/>
    <property type="evidence" value="ECO:0007669"/>
    <property type="project" value="InterPro"/>
</dbReference>
<dbReference type="GO" id="GO:0042626">
    <property type="term" value="F:ATPase-coupled transmembrane transporter activity"/>
    <property type="evidence" value="ECO:0007669"/>
    <property type="project" value="TreeGrafter"/>
</dbReference>
<dbReference type="CDD" id="cd03225">
    <property type="entry name" value="ABC_cobalt_CbiO_domain1"/>
    <property type="match status" value="1"/>
</dbReference>
<dbReference type="FunFam" id="3.40.50.300:FF:000224">
    <property type="entry name" value="Energy-coupling factor transporter ATP-binding protein EcfA"/>
    <property type="match status" value="1"/>
</dbReference>
<dbReference type="Gene3D" id="3.40.50.300">
    <property type="entry name" value="P-loop containing nucleotide triphosphate hydrolases"/>
    <property type="match status" value="1"/>
</dbReference>
<dbReference type="InterPro" id="IPR003593">
    <property type="entry name" value="AAA+_ATPase"/>
</dbReference>
<dbReference type="InterPro" id="IPR003439">
    <property type="entry name" value="ABC_transporter-like_ATP-bd"/>
</dbReference>
<dbReference type="InterPro" id="IPR017871">
    <property type="entry name" value="ABC_transporter-like_CS"/>
</dbReference>
<dbReference type="InterPro" id="IPR015856">
    <property type="entry name" value="ABC_transpr_CbiO/EcfA_su"/>
</dbReference>
<dbReference type="InterPro" id="IPR050095">
    <property type="entry name" value="ECF_ABC_transporter_ATP-bd"/>
</dbReference>
<dbReference type="InterPro" id="IPR027417">
    <property type="entry name" value="P-loop_NTPase"/>
</dbReference>
<dbReference type="PANTHER" id="PTHR43553:SF27">
    <property type="entry name" value="ENERGY-COUPLING FACTOR TRANSPORTER ATP-BINDING PROTEIN ECFA2"/>
    <property type="match status" value="1"/>
</dbReference>
<dbReference type="PANTHER" id="PTHR43553">
    <property type="entry name" value="HEAVY METAL TRANSPORTER"/>
    <property type="match status" value="1"/>
</dbReference>
<dbReference type="Pfam" id="PF00005">
    <property type="entry name" value="ABC_tran"/>
    <property type="match status" value="1"/>
</dbReference>
<dbReference type="SMART" id="SM00382">
    <property type="entry name" value="AAA"/>
    <property type="match status" value="1"/>
</dbReference>
<dbReference type="SUPFAM" id="SSF52540">
    <property type="entry name" value="P-loop containing nucleoside triphosphate hydrolases"/>
    <property type="match status" value="1"/>
</dbReference>
<dbReference type="PROSITE" id="PS00211">
    <property type="entry name" value="ABC_TRANSPORTER_1"/>
    <property type="match status" value="1"/>
</dbReference>
<dbReference type="PROSITE" id="PS50893">
    <property type="entry name" value="ABC_TRANSPORTER_2"/>
    <property type="match status" value="1"/>
</dbReference>
<evidence type="ECO:0000250" key="1"/>
<evidence type="ECO:0000255" key="2">
    <source>
        <dbReference type="PROSITE-ProRule" id="PRU00434"/>
    </source>
</evidence>
<evidence type="ECO:0000305" key="3"/>
<protein>
    <recommendedName>
        <fullName>Putative ABC transporter ATP-binding protein CA_C0773</fullName>
        <ecNumber>7.-.-.-</ecNumber>
    </recommendedName>
</protein>
<proteinExistence type="inferred from homology"/>
<accession>Q97KZ3</accession>
<keyword id="KW-0067">ATP-binding</keyword>
<keyword id="KW-1003">Cell membrane</keyword>
<keyword id="KW-0472">Membrane</keyword>
<keyword id="KW-0547">Nucleotide-binding</keyword>
<keyword id="KW-1185">Reference proteome</keyword>
<keyword id="KW-1278">Translocase</keyword>
<keyword id="KW-0813">Transport</keyword>
<organism>
    <name type="scientific">Clostridium acetobutylicum (strain ATCC 824 / DSM 792 / JCM 1419 / IAM 19013 / LMG 5710 / NBRC 13948 / NRRL B-527 / VKM B-1787 / 2291 / W)</name>
    <dbReference type="NCBI Taxonomy" id="272562"/>
    <lineage>
        <taxon>Bacteria</taxon>
        <taxon>Bacillati</taxon>
        <taxon>Bacillota</taxon>
        <taxon>Clostridia</taxon>
        <taxon>Eubacteriales</taxon>
        <taxon>Clostridiaceae</taxon>
        <taxon>Clostridium</taxon>
    </lineage>
</organism>
<gene>
    <name type="ordered locus">CA_C0773</name>
</gene>
<name>Y773_CLOAB</name>
<reference key="1">
    <citation type="journal article" date="2001" name="J. Bacteriol.">
        <title>Genome sequence and comparative analysis of the solvent-producing bacterium Clostridium acetobutylicum.</title>
        <authorList>
            <person name="Noelling J."/>
            <person name="Breton G."/>
            <person name="Omelchenko M.V."/>
            <person name="Makarova K.S."/>
            <person name="Zeng Q."/>
            <person name="Gibson R."/>
            <person name="Lee H.M."/>
            <person name="Dubois J."/>
            <person name="Qiu D."/>
            <person name="Hitti J."/>
            <person name="Wolf Y.I."/>
            <person name="Tatusov R.L."/>
            <person name="Sabathe F."/>
            <person name="Doucette-Stamm L.A."/>
            <person name="Soucaille P."/>
            <person name="Daly M.J."/>
            <person name="Bennett G.N."/>
            <person name="Koonin E.V."/>
            <person name="Smith D.R."/>
        </authorList>
    </citation>
    <scope>NUCLEOTIDE SEQUENCE [LARGE SCALE GENOMIC DNA]</scope>
    <source>
        <strain>ATCC 824 / DSM 792 / JCM 1419 / IAM 19013 / LMG 5710 / NBRC 13948 / NRRL B-527 / VKM B-1787 / 2291 / W</strain>
    </source>
</reference>
<sequence length="241" mass="27377">MIKLEKVSFTYKNRAALCDVNVDINEGEAVAIIGPNGSGKSTFLKVLNGILFPSSGRYVFDNNEINENTLKNNKFLKLFHKRVGFVFQNSDAQLFCSTVFDEVAFGIMQMGLEGEEVDKRVRDCLKLLNIEKLKEEHPYNLSGGEKKRVAIASVLAMNPEVITLDEPMNAIDPKGKRFLKELLIDLNKSGKTIICATHDFEYIEGVFNRAVVFSENHKIIRDDRYENIISDREFLMECNII</sequence>